<keyword id="KW-0408">Iron</keyword>
<keyword id="KW-0479">Metal-binding</keyword>
<keyword id="KW-0560">Oxidoreductase</keyword>
<evidence type="ECO:0000250" key="1">
    <source>
        <dbReference type="UniProtKB" id="O84616"/>
    </source>
</evidence>
<evidence type="ECO:0000305" key="2"/>
<organism>
    <name type="scientific">Chlamydia muridarum (strain MoPn / Nigg)</name>
    <dbReference type="NCBI Taxonomy" id="243161"/>
    <lineage>
        <taxon>Bacteria</taxon>
        <taxon>Pseudomonadati</taxon>
        <taxon>Chlamydiota</taxon>
        <taxon>Chlamydiia</taxon>
        <taxon>Chlamydiales</taxon>
        <taxon>Chlamydiaceae</taxon>
        <taxon>Chlamydia/Chlamydophila group</taxon>
        <taxon>Chlamydia</taxon>
    </lineage>
</organism>
<protein>
    <recommendedName>
        <fullName evidence="1">4-aminobenzoate synthase</fullName>
        <ecNumber evidence="1">1.3.3.-</ecNumber>
    </recommendedName>
    <alternativeName>
        <fullName evidence="1">para-aminobenzoate synthase</fullName>
        <shortName evidence="1">PABA synthase</shortName>
    </alternativeName>
</protein>
<feature type="chain" id="PRO_0000219992" description="4-aminobenzoate synthase">
    <location>
        <begin position="1"/>
        <end position="236"/>
    </location>
</feature>
<feature type="binding site" evidence="1">
    <location>
        <position position="87"/>
    </location>
    <ligand>
        <name>Fe(2+)</name>
        <dbReference type="ChEBI" id="CHEBI:29033"/>
        <label>1</label>
    </ligand>
</feature>
<feature type="binding site" evidence="1">
    <location>
        <position position="87"/>
    </location>
    <ligand>
        <name>Fe(2+)</name>
        <dbReference type="ChEBI" id="CHEBI:29033"/>
        <label>2</label>
    </ligand>
</feature>
<feature type="binding site" evidence="1">
    <location>
        <position position="94"/>
    </location>
    <ligand>
        <name>Fe(2+)</name>
        <dbReference type="ChEBI" id="CHEBI:29033"/>
        <label>1</label>
    </ligand>
</feature>
<feature type="binding site" evidence="1">
    <location>
        <position position="148"/>
    </location>
    <ligand>
        <name>Fe(2+)</name>
        <dbReference type="ChEBI" id="CHEBI:29033"/>
        <label>2</label>
    </ligand>
</feature>
<feature type="binding site" evidence="1">
    <location>
        <position position="180"/>
    </location>
    <ligand>
        <name>Fe(2+)</name>
        <dbReference type="ChEBI" id="CHEBI:29033"/>
        <label>1</label>
    </ligand>
</feature>
<feature type="binding site" evidence="1">
    <location>
        <position position="184"/>
    </location>
    <ligand>
        <name>Fe(2+)</name>
        <dbReference type="ChEBI" id="CHEBI:29033"/>
        <label>2</label>
    </ligand>
</feature>
<feature type="binding site" evidence="1">
    <location>
        <position position="187"/>
    </location>
    <ligand>
        <name>Fe(2+)</name>
        <dbReference type="ChEBI" id="CHEBI:29033"/>
        <label>2</label>
    </ligand>
</feature>
<feature type="site" description="Side-chain cleavage" evidence="1">
    <location>
        <position position="33"/>
    </location>
</feature>
<gene>
    <name type="ordered locus">TC_0900</name>
</gene>
<dbReference type="EC" id="1.3.3.-" evidence="1"/>
<dbReference type="EMBL" id="AE002160">
    <property type="protein sequence ID" value="AAF39693.1"/>
    <property type="molecule type" value="Genomic_DNA"/>
</dbReference>
<dbReference type="PIR" id="D81652">
    <property type="entry name" value="D81652"/>
</dbReference>
<dbReference type="SMR" id="Q9PJC9"/>
<dbReference type="KEGG" id="cmu:TC_0900"/>
<dbReference type="eggNOG" id="COG5424">
    <property type="taxonomic scope" value="Bacteria"/>
</dbReference>
<dbReference type="HOGENOM" id="CLU_088144_0_0_0"/>
<dbReference type="Proteomes" id="UP000000800">
    <property type="component" value="Chromosome"/>
</dbReference>
<dbReference type="GO" id="GO:0046872">
    <property type="term" value="F:metal ion binding"/>
    <property type="evidence" value="ECO:0007669"/>
    <property type="project" value="UniProtKB-KW"/>
</dbReference>
<dbReference type="GO" id="GO:0016491">
    <property type="term" value="F:oxidoreductase activity"/>
    <property type="evidence" value="ECO:0007669"/>
    <property type="project" value="UniProtKB-KW"/>
</dbReference>
<dbReference type="GO" id="GO:0044281">
    <property type="term" value="P:small molecule metabolic process"/>
    <property type="evidence" value="ECO:0007669"/>
    <property type="project" value="UniProtKB-ARBA"/>
</dbReference>
<dbReference type="GO" id="GO:0006790">
    <property type="term" value="P:sulfur compound metabolic process"/>
    <property type="evidence" value="ECO:0007669"/>
    <property type="project" value="UniProtKB-ARBA"/>
</dbReference>
<dbReference type="CDD" id="cd19370">
    <property type="entry name" value="TenA_PqqC"/>
    <property type="match status" value="1"/>
</dbReference>
<dbReference type="Gene3D" id="1.20.910.10">
    <property type="entry name" value="Heme oxygenase-like"/>
    <property type="match status" value="1"/>
</dbReference>
<dbReference type="InterPro" id="IPR027572">
    <property type="entry name" value="Fol-rel_CADD"/>
</dbReference>
<dbReference type="InterPro" id="IPR016084">
    <property type="entry name" value="Haem_Oase-like_multi-hlx"/>
</dbReference>
<dbReference type="InterPro" id="IPR039068">
    <property type="entry name" value="PqqC-like"/>
</dbReference>
<dbReference type="InterPro" id="IPR004305">
    <property type="entry name" value="Thiaminase-2/PQQC"/>
</dbReference>
<dbReference type="NCBIfam" id="TIGR04305">
    <property type="entry name" value="fol_rel_CADD"/>
    <property type="match status" value="1"/>
</dbReference>
<dbReference type="PANTHER" id="PTHR40279:SF3">
    <property type="entry name" value="4-AMINOBENZOATE SYNTHASE"/>
    <property type="match status" value="1"/>
</dbReference>
<dbReference type="PANTHER" id="PTHR40279">
    <property type="entry name" value="PQQC-LIKE PROTEIN"/>
    <property type="match status" value="1"/>
</dbReference>
<dbReference type="Pfam" id="PF03070">
    <property type="entry name" value="TENA_THI-4"/>
    <property type="match status" value="1"/>
</dbReference>
<dbReference type="SMART" id="SM01236">
    <property type="entry name" value="Haem_oxygenase_2"/>
    <property type="match status" value="1"/>
</dbReference>
<dbReference type="SUPFAM" id="SSF48613">
    <property type="entry name" value="Heme oxygenase-like"/>
    <property type="match status" value="1"/>
</dbReference>
<accession>Q9PJC9</accession>
<proteinExistence type="inferred from homology"/>
<comment type="function">
    <text evidence="1">Involved in de novo para-aminobenzoate (PABA) biosynthesis. Acts as a self-sacrificing or 'suicide' enzyme that utilizes its own active site tyrosine residue(s) as the substrate for PABA synthesis. The side chain of the tyrosine residue is released from the protein backbone via cleavage of the C(alpha)-C(beta) bond, leaving a glycine in place of the original tyrosine residue. Reaction requires O(2) and a reduced dimetal cofactor.</text>
</comment>
<comment type="cofactor">
    <cofactor evidence="1">
        <name>Fe(2+)</name>
        <dbReference type="ChEBI" id="CHEBI:29033"/>
    </cofactor>
    <cofactor evidence="1">
        <name>Mn(2+)</name>
        <dbReference type="ChEBI" id="CHEBI:29035"/>
    </cofactor>
    <text evidence="1">Binds 2 divalent metal cations per subunit.</text>
</comment>
<comment type="subunit">
    <text evidence="1">Homodimer.</text>
</comment>
<comment type="similarity">
    <text evidence="2">Belongs to the CADD family.</text>
</comment>
<sequence>MESRKGIKEVSMNFLDQLDAIIQNKHMLEHPFYMKWSKGELTKEQLQAYAKDYYLHIKAFPKYLSAIHSRCDDLEARKLLLDNLMDEENGYPNHIDLWKQFVFALGVSSEELEAHEPSEAAKAKVATFMRWCTGDSLAAGVAALYSYESQIPCVAKEKIRGLIEYFGFSNPEDYAYFTEHEEADVRHAREEKALIEMLSRDDSDKVLEASREVTQSLYGFLDSFLEPATCCHCHKA</sequence>
<reference key="1">
    <citation type="journal article" date="2000" name="Nucleic Acids Res.">
        <title>Genome sequences of Chlamydia trachomatis MoPn and Chlamydia pneumoniae AR39.</title>
        <authorList>
            <person name="Read T.D."/>
            <person name="Brunham R.C."/>
            <person name="Shen C."/>
            <person name="Gill S.R."/>
            <person name="Heidelberg J.F."/>
            <person name="White O."/>
            <person name="Hickey E.K."/>
            <person name="Peterson J.D."/>
            <person name="Utterback T.R."/>
            <person name="Berry K.J."/>
            <person name="Bass S."/>
            <person name="Linher K.D."/>
            <person name="Weidman J.F."/>
            <person name="Khouri H.M."/>
            <person name="Craven B."/>
            <person name="Bowman C."/>
            <person name="Dodson R.J."/>
            <person name="Gwinn M.L."/>
            <person name="Nelson W.C."/>
            <person name="DeBoy R.T."/>
            <person name="Kolonay J.F."/>
            <person name="McClarty G."/>
            <person name="Salzberg S.L."/>
            <person name="Eisen J.A."/>
            <person name="Fraser C.M."/>
        </authorList>
    </citation>
    <scope>NUCLEOTIDE SEQUENCE [LARGE SCALE GENOMIC DNA]</scope>
    <source>
        <strain>MoPn / Nigg</strain>
    </source>
</reference>
<name>CADD_CHLMU</name>